<dbReference type="EC" id="5.3.1.9" evidence="1"/>
<dbReference type="EMBL" id="BX571856">
    <property type="protein sequence ID" value="CAG39930.1"/>
    <property type="molecule type" value="Genomic_DNA"/>
</dbReference>
<dbReference type="RefSeq" id="WP_000148855.1">
    <property type="nucleotide sequence ID" value="NC_002952.2"/>
</dbReference>
<dbReference type="SMR" id="Q6GIC6"/>
<dbReference type="KEGG" id="sar:SAR0924"/>
<dbReference type="HOGENOM" id="CLU_037303_0_1_9"/>
<dbReference type="UniPathway" id="UPA00109">
    <property type="reaction ID" value="UER00181"/>
</dbReference>
<dbReference type="UniPathway" id="UPA00138"/>
<dbReference type="Proteomes" id="UP000000596">
    <property type="component" value="Chromosome"/>
</dbReference>
<dbReference type="GO" id="GO:0005829">
    <property type="term" value="C:cytosol"/>
    <property type="evidence" value="ECO:0007669"/>
    <property type="project" value="TreeGrafter"/>
</dbReference>
<dbReference type="GO" id="GO:0097367">
    <property type="term" value="F:carbohydrate derivative binding"/>
    <property type="evidence" value="ECO:0007669"/>
    <property type="project" value="InterPro"/>
</dbReference>
<dbReference type="GO" id="GO:0004347">
    <property type="term" value="F:glucose-6-phosphate isomerase activity"/>
    <property type="evidence" value="ECO:0007669"/>
    <property type="project" value="UniProtKB-UniRule"/>
</dbReference>
<dbReference type="GO" id="GO:0048029">
    <property type="term" value="F:monosaccharide binding"/>
    <property type="evidence" value="ECO:0007669"/>
    <property type="project" value="TreeGrafter"/>
</dbReference>
<dbReference type="GO" id="GO:0006094">
    <property type="term" value="P:gluconeogenesis"/>
    <property type="evidence" value="ECO:0007669"/>
    <property type="project" value="UniProtKB-UniRule"/>
</dbReference>
<dbReference type="GO" id="GO:0051156">
    <property type="term" value="P:glucose 6-phosphate metabolic process"/>
    <property type="evidence" value="ECO:0007669"/>
    <property type="project" value="TreeGrafter"/>
</dbReference>
<dbReference type="GO" id="GO:0006096">
    <property type="term" value="P:glycolytic process"/>
    <property type="evidence" value="ECO:0007669"/>
    <property type="project" value="UniProtKB-UniRule"/>
</dbReference>
<dbReference type="CDD" id="cd05015">
    <property type="entry name" value="SIS_PGI_1"/>
    <property type="match status" value="1"/>
</dbReference>
<dbReference type="CDD" id="cd05016">
    <property type="entry name" value="SIS_PGI_2"/>
    <property type="match status" value="1"/>
</dbReference>
<dbReference type="FunFam" id="3.40.50.10490:FF:000015">
    <property type="entry name" value="Glucose-6-phosphate isomerase"/>
    <property type="match status" value="1"/>
</dbReference>
<dbReference type="FunFam" id="3.40.50.10490:FF:000016">
    <property type="entry name" value="Glucose-6-phosphate isomerase"/>
    <property type="match status" value="1"/>
</dbReference>
<dbReference type="Gene3D" id="3.40.50.10490">
    <property type="entry name" value="Glucose-6-phosphate isomerase like protein, domain 1"/>
    <property type="match status" value="3"/>
</dbReference>
<dbReference type="HAMAP" id="MF_00473">
    <property type="entry name" value="G6P_isomerase"/>
    <property type="match status" value="1"/>
</dbReference>
<dbReference type="InterPro" id="IPR001672">
    <property type="entry name" value="G6P_Isomerase"/>
</dbReference>
<dbReference type="InterPro" id="IPR018189">
    <property type="entry name" value="Phosphoglucose_isomerase_CS"/>
</dbReference>
<dbReference type="InterPro" id="IPR046348">
    <property type="entry name" value="SIS_dom_sf"/>
</dbReference>
<dbReference type="InterPro" id="IPR035476">
    <property type="entry name" value="SIS_PGI_1"/>
</dbReference>
<dbReference type="InterPro" id="IPR035482">
    <property type="entry name" value="SIS_PGI_2"/>
</dbReference>
<dbReference type="NCBIfam" id="NF010697">
    <property type="entry name" value="PRK14097.1"/>
    <property type="match status" value="1"/>
</dbReference>
<dbReference type="PANTHER" id="PTHR11469">
    <property type="entry name" value="GLUCOSE-6-PHOSPHATE ISOMERASE"/>
    <property type="match status" value="1"/>
</dbReference>
<dbReference type="PANTHER" id="PTHR11469:SF1">
    <property type="entry name" value="GLUCOSE-6-PHOSPHATE ISOMERASE"/>
    <property type="match status" value="1"/>
</dbReference>
<dbReference type="Pfam" id="PF00342">
    <property type="entry name" value="PGI"/>
    <property type="match status" value="1"/>
</dbReference>
<dbReference type="PRINTS" id="PR00662">
    <property type="entry name" value="G6PISOMERASE"/>
</dbReference>
<dbReference type="SUPFAM" id="SSF53697">
    <property type="entry name" value="SIS domain"/>
    <property type="match status" value="1"/>
</dbReference>
<dbReference type="PROSITE" id="PS00765">
    <property type="entry name" value="P_GLUCOSE_ISOMERASE_1"/>
    <property type="match status" value="1"/>
</dbReference>
<dbReference type="PROSITE" id="PS00174">
    <property type="entry name" value="P_GLUCOSE_ISOMERASE_2"/>
    <property type="match status" value="1"/>
</dbReference>
<dbReference type="PROSITE" id="PS51463">
    <property type="entry name" value="P_GLUCOSE_ISOMERASE_3"/>
    <property type="match status" value="1"/>
</dbReference>
<feature type="chain" id="PRO_0000180727" description="Glucose-6-phosphate isomerase">
    <location>
        <begin position="1"/>
        <end position="443"/>
    </location>
</feature>
<feature type="active site" description="Proton donor" evidence="1">
    <location>
        <position position="285"/>
    </location>
</feature>
<feature type="active site" evidence="1">
    <location>
        <position position="306"/>
    </location>
</feature>
<feature type="active site" evidence="1">
    <location>
        <position position="420"/>
    </location>
</feature>
<reference key="1">
    <citation type="journal article" date="2004" name="Proc. Natl. Acad. Sci. U.S.A.">
        <title>Complete genomes of two clinical Staphylococcus aureus strains: evidence for the rapid evolution of virulence and drug resistance.</title>
        <authorList>
            <person name="Holden M.T.G."/>
            <person name="Feil E.J."/>
            <person name="Lindsay J.A."/>
            <person name="Peacock S.J."/>
            <person name="Day N.P.J."/>
            <person name="Enright M.C."/>
            <person name="Foster T.J."/>
            <person name="Moore C.E."/>
            <person name="Hurst L."/>
            <person name="Atkin R."/>
            <person name="Barron A."/>
            <person name="Bason N."/>
            <person name="Bentley S.D."/>
            <person name="Chillingworth C."/>
            <person name="Chillingworth T."/>
            <person name="Churcher C."/>
            <person name="Clark L."/>
            <person name="Corton C."/>
            <person name="Cronin A."/>
            <person name="Doggett J."/>
            <person name="Dowd L."/>
            <person name="Feltwell T."/>
            <person name="Hance Z."/>
            <person name="Harris B."/>
            <person name="Hauser H."/>
            <person name="Holroyd S."/>
            <person name="Jagels K."/>
            <person name="James K.D."/>
            <person name="Lennard N."/>
            <person name="Line A."/>
            <person name="Mayes R."/>
            <person name="Moule S."/>
            <person name="Mungall K."/>
            <person name="Ormond D."/>
            <person name="Quail M.A."/>
            <person name="Rabbinowitsch E."/>
            <person name="Rutherford K.M."/>
            <person name="Sanders M."/>
            <person name="Sharp S."/>
            <person name="Simmonds M."/>
            <person name="Stevens K."/>
            <person name="Whitehead S."/>
            <person name="Barrell B.G."/>
            <person name="Spratt B.G."/>
            <person name="Parkhill J."/>
        </authorList>
    </citation>
    <scope>NUCLEOTIDE SEQUENCE [LARGE SCALE GENOMIC DNA]</scope>
    <source>
        <strain>MRSA252</strain>
    </source>
</reference>
<comment type="function">
    <text evidence="1">Catalyzes the reversible isomerization of glucose-6-phosphate to fructose-6-phosphate.</text>
</comment>
<comment type="catalytic activity">
    <reaction evidence="1">
        <text>alpha-D-glucose 6-phosphate = beta-D-fructose 6-phosphate</text>
        <dbReference type="Rhea" id="RHEA:11816"/>
        <dbReference type="ChEBI" id="CHEBI:57634"/>
        <dbReference type="ChEBI" id="CHEBI:58225"/>
        <dbReference type="EC" id="5.3.1.9"/>
    </reaction>
</comment>
<comment type="pathway">
    <text evidence="1">Carbohydrate biosynthesis; gluconeogenesis.</text>
</comment>
<comment type="pathway">
    <text evidence="1">Carbohydrate degradation; glycolysis; D-glyceraldehyde 3-phosphate and glycerone phosphate from D-glucose: step 2/4.</text>
</comment>
<comment type="subcellular location">
    <subcellularLocation>
        <location evidence="1">Cytoplasm</location>
    </subcellularLocation>
</comment>
<comment type="similarity">
    <text evidence="1">Belongs to the GPI family.</text>
</comment>
<name>G6PI_STAAR</name>
<organism>
    <name type="scientific">Staphylococcus aureus (strain MRSA252)</name>
    <dbReference type="NCBI Taxonomy" id="282458"/>
    <lineage>
        <taxon>Bacteria</taxon>
        <taxon>Bacillati</taxon>
        <taxon>Bacillota</taxon>
        <taxon>Bacilli</taxon>
        <taxon>Bacillales</taxon>
        <taxon>Staphylococcaceae</taxon>
        <taxon>Staphylococcus</taxon>
    </lineage>
</organism>
<evidence type="ECO:0000255" key="1">
    <source>
        <dbReference type="HAMAP-Rule" id="MF_00473"/>
    </source>
</evidence>
<accession>Q6GIC6</accession>
<protein>
    <recommendedName>
        <fullName evidence="1">Glucose-6-phosphate isomerase</fullName>
        <shortName evidence="1">GPI</shortName>
        <ecNumber evidence="1">5.3.1.9</ecNumber>
    </recommendedName>
    <alternativeName>
        <fullName evidence="1">Phosphoglucose isomerase</fullName>
        <shortName evidence="1">PGI</shortName>
    </alternativeName>
    <alternativeName>
        <fullName evidence="1">Phosphohexose isomerase</fullName>
        <shortName evidence="1">PHI</shortName>
    </alternativeName>
</protein>
<gene>
    <name evidence="1" type="primary">pgi</name>
    <name type="ordered locus">SAR0924</name>
</gene>
<proteinExistence type="inferred from homology"/>
<keyword id="KW-0963">Cytoplasm</keyword>
<keyword id="KW-0312">Gluconeogenesis</keyword>
<keyword id="KW-0324">Glycolysis</keyword>
<keyword id="KW-0413">Isomerase</keyword>
<sequence length="443" mass="49808">MTHIQLDFSKTLEFFGEHELKQQQEIVKSIHKTIHEGTGAGSDFLGWVDLPVDYDKEEFSRIVEASKRIKENSDVLVVIGIGGSYLGARAAIEMLTSSFRNSNEYPEIVFVGNHLSSTYTKELVDYLADKDFSVNVISKSGTTTEPAVAFRLFKQLVEERYGKEEAQKRIFATTDKEKGALKQLATNEGYETFIVPDDVGGRYSVLTAVGLLPIATAGINIEAMMIGAAKAREELSSDKLEENIAYQYATIRNILYAKGYTTEMLINYEPSMQYFNEWWKQLFGESEGKDFKGIYPSSANYTTDLHSLGQYVQEGRRFLFETVVKVNHPKYDITIEKDSDDLDGLNYLAGKTIDEVNTKAFEGTLLAHTDGGVPNMVVNIPQLDEETFGYVVYFFELACAMSGYQLGVNPFNQPGVEAYKQNMFALLGKPGFEDLKKELEERL</sequence>